<feature type="chain" id="PRO_0000082572" description="Ubiquitin-conjugating enzyme E2 3">
    <location>
        <begin position="1"/>
        <end position="150"/>
    </location>
</feature>
<feature type="domain" description="UBC core" evidence="1">
    <location>
        <begin position="4"/>
        <end position="150"/>
    </location>
</feature>
<feature type="active site" description="Glycyl thioester intermediate" evidence="1 2">
    <location>
        <position position="88"/>
    </location>
</feature>
<feature type="sequence conflict" description="In Ref. 5; AAK82529." evidence="5" ref="5">
    <original>F</original>
    <variation>L</variation>
    <location>
        <position position="13"/>
    </location>
</feature>
<organism>
    <name type="scientific">Arabidopsis thaliana</name>
    <name type="common">Mouse-ear cress</name>
    <dbReference type="NCBI Taxonomy" id="3702"/>
    <lineage>
        <taxon>Eukaryota</taxon>
        <taxon>Viridiplantae</taxon>
        <taxon>Streptophyta</taxon>
        <taxon>Embryophyta</taxon>
        <taxon>Tracheophyta</taxon>
        <taxon>Spermatophyta</taxon>
        <taxon>Magnoliopsida</taxon>
        <taxon>eudicotyledons</taxon>
        <taxon>Gunneridae</taxon>
        <taxon>Pentapetalae</taxon>
        <taxon>rosids</taxon>
        <taxon>malvids</taxon>
        <taxon>Brassicales</taxon>
        <taxon>Brassicaceae</taxon>
        <taxon>Camelineae</taxon>
        <taxon>Arabidopsis</taxon>
    </lineage>
</organism>
<protein>
    <recommendedName>
        <fullName>Ubiquitin-conjugating enzyme E2 3</fullName>
        <ecNumber>2.3.2.23</ecNumber>
    </recommendedName>
    <alternativeName>
        <fullName>E2 ubiquitin-conjugating enzyme 3</fullName>
    </alternativeName>
    <alternativeName>
        <fullName>Ubiquitin carrier protein 3</fullName>
    </alternativeName>
    <alternativeName>
        <fullName>Ubiquitin-conjugating enzyme E2-17 kDa 3</fullName>
    </alternativeName>
    <alternativeName>
        <fullName>Ubiquitin-protein ligase 3</fullName>
    </alternativeName>
</protein>
<name>UBC3_ARATH</name>
<gene>
    <name type="primary">UBC3</name>
    <name type="ordered locus">At5g62540</name>
    <name type="ORF">K19B1.15</name>
</gene>
<keyword id="KW-0067">ATP-binding</keyword>
<keyword id="KW-0547">Nucleotide-binding</keyword>
<keyword id="KW-1185">Reference proteome</keyword>
<keyword id="KW-0808">Transferase</keyword>
<keyword id="KW-0833">Ubl conjugation pathway</keyword>
<reference key="1">
    <citation type="journal article" date="1994" name="Plant Mol. Biol.">
        <title>Homologues of wheat ubiquitin-conjugating enzymes -- TaUBC1 and TaUBC4 are encoded by small multigene families in Arabidopsis thaliana.</title>
        <authorList>
            <person name="Sullivan M.L."/>
            <person name="Carpenter T.B."/>
            <person name="Vierstra R.D."/>
        </authorList>
    </citation>
    <scope>NUCLEOTIDE SEQUENCE [GENOMIC DNA]</scope>
    <source>
        <strain>cv. Columbia</strain>
        <tissue>Green leaf</tissue>
    </source>
</reference>
<reference key="2">
    <citation type="journal article" date="2005" name="Plant Physiol.">
        <title>Genome analysis and functional characterization of the E2 and RING-type E3 ligase ubiquitination enzymes of Arabidopsis.</title>
        <authorList>
            <person name="Kraft E."/>
            <person name="Stone S.L."/>
            <person name="Ma L."/>
            <person name="Su N."/>
            <person name="Gao Y."/>
            <person name="Lau O.-S."/>
            <person name="Deng X.-W."/>
            <person name="Callis J."/>
        </authorList>
    </citation>
    <scope>NUCLEOTIDE SEQUENCE [MRNA]</scope>
    <scope>FUNCTION</scope>
    <scope>INDUCTION</scope>
    <scope>GENE FAMILY</scope>
    <scope>NOMENCLATURE</scope>
</reference>
<reference key="3">
    <citation type="journal article" date="1998" name="DNA Res.">
        <title>Structural analysis of Arabidopsis thaliana chromosome 5. VII. Sequence features of the regions of 1,013,767 bp covered by sixteen physically assigned P1 and TAC clones.</title>
        <authorList>
            <person name="Nakamura Y."/>
            <person name="Sato S."/>
            <person name="Asamizu E."/>
            <person name="Kaneko T."/>
            <person name="Kotani H."/>
            <person name="Miyajima N."/>
            <person name="Tabata S."/>
        </authorList>
    </citation>
    <scope>NUCLEOTIDE SEQUENCE [LARGE SCALE GENOMIC DNA]</scope>
    <source>
        <strain>cv. Columbia</strain>
    </source>
</reference>
<reference key="4">
    <citation type="journal article" date="2017" name="Plant J.">
        <title>Araport11: a complete reannotation of the Arabidopsis thaliana reference genome.</title>
        <authorList>
            <person name="Cheng C.Y."/>
            <person name="Krishnakumar V."/>
            <person name="Chan A.P."/>
            <person name="Thibaud-Nissen F."/>
            <person name="Schobel S."/>
            <person name="Town C.D."/>
        </authorList>
    </citation>
    <scope>GENOME REANNOTATION</scope>
    <source>
        <strain>cv. Columbia</strain>
    </source>
</reference>
<reference key="5">
    <citation type="journal article" date="2003" name="Science">
        <title>Empirical analysis of transcriptional activity in the Arabidopsis genome.</title>
        <authorList>
            <person name="Yamada K."/>
            <person name="Lim J."/>
            <person name="Dale J.M."/>
            <person name="Chen H."/>
            <person name="Shinn P."/>
            <person name="Palm C.J."/>
            <person name="Southwick A.M."/>
            <person name="Wu H.C."/>
            <person name="Kim C.J."/>
            <person name="Nguyen M."/>
            <person name="Pham P.K."/>
            <person name="Cheuk R.F."/>
            <person name="Karlin-Newmann G."/>
            <person name="Liu S.X."/>
            <person name="Lam B."/>
            <person name="Sakano H."/>
            <person name="Wu T."/>
            <person name="Yu G."/>
            <person name="Miranda M."/>
            <person name="Quach H.L."/>
            <person name="Tripp M."/>
            <person name="Chang C.H."/>
            <person name="Lee J.M."/>
            <person name="Toriumi M.J."/>
            <person name="Chan M.M."/>
            <person name="Tang C.C."/>
            <person name="Onodera C.S."/>
            <person name="Deng J.M."/>
            <person name="Akiyama K."/>
            <person name="Ansari Y."/>
            <person name="Arakawa T."/>
            <person name="Banh J."/>
            <person name="Banno F."/>
            <person name="Bowser L."/>
            <person name="Brooks S.Y."/>
            <person name="Carninci P."/>
            <person name="Chao Q."/>
            <person name="Choy N."/>
            <person name="Enju A."/>
            <person name="Goldsmith A.D."/>
            <person name="Gurjal M."/>
            <person name="Hansen N.F."/>
            <person name="Hayashizaki Y."/>
            <person name="Johnson-Hopson C."/>
            <person name="Hsuan V.W."/>
            <person name="Iida K."/>
            <person name="Karnes M."/>
            <person name="Khan S."/>
            <person name="Koesema E."/>
            <person name="Ishida J."/>
            <person name="Jiang P.X."/>
            <person name="Jones T."/>
            <person name="Kawai J."/>
            <person name="Kamiya A."/>
            <person name="Meyers C."/>
            <person name="Nakajima M."/>
            <person name="Narusaka M."/>
            <person name="Seki M."/>
            <person name="Sakurai T."/>
            <person name="Satou M."/>
            <person name="Tamse R."/>
            <person name="Vaysberg M."/>
            <person name="Wallender E.K."/>
            <person name="Wong C."/>
            <person name="Yamamura Y."/>
            <person name="Yuan S."/>
            <person name="Shinozaki K."/>
            <person name="Davis R.W."/>
            <person name="Theologis A."/>
            <person name="Ecker J.R."/>
        </authorList>
    </citation>
    <scope>NUCLEOTIDE SEQUENCE [LARGE SCALE MRNA]</scope>
    <source>
        <strain>cv. Columbia</strain>
    </source>
</reference>
<reference key="6">
    <citation type="submission" date="2002-03" db="EMBL/GenBank/DDBJ databases">
        <title>Full-length cDNA from Arabidopsis thaliana.</title>
        <authorList>
            <person name="Brover V.V."/>
            <person name="Troukhan M.E."/>
            <person name="Alexandrov N.A."/>
            <person name="Lu Y.-P."/>
            <person name="Flavell R.B."/>
            <person name="Feldmann K.A."/>
        </authorList>
    </citation>
    <scope>NUCLEOTIDE SEQUENCE [LARGE SCALE MRNA]</scope>
</reference>
<reference key="7">
    <citation type="journal article" date="1996" name="Plant Mol. Biol.">
        <title>Members of two gene families encoding ubiquitin-conjugating enzymes, AtUBC1-3 and AtUBC4-6, from Arabidopsis thaliana are differentially expressed.</title>
        <authorList>
            <person name="Thoma S."/>
            <person name="Sullivan M.L."/>
            <person name="Vierstra R.D."/>
        </authorList>
    </citation>
    <scope>TISSUE SPECIFICITY</scope>
    <scope>INDUCTION</scope>
</reference>
<evidence type="ECO:0000255" key="1">
    <source>
        <dbReference type="PROSITE-ProRule" id="PRU00388"/>
    </source>
</evidence>
<evidence type="ECO:0000255" key="2">
    <source>
        <dbReference type="PROSITE-ProRule" id="PRU10133"/>
    </source>
</evidence>
<evidence type="ECO:0000269" key="3">
    <source>
    </source>
</evidence>
<evidence type="ECO:0000269" key="4">
    <source>
    </source>
</evidence>
<evidence type="ECO:0000305" key="5"/>
<accession>P42746</accession>
<accession>Q4TZ06</accession>
<accession>Q8H1P1</accession>
<accession>Q94AD2</accession>
<comment type="function">
    <text evidence="3">Accepts the ubiquitin from the E1 complex and catalyzes its covalent attachment to other proteins.</text>
</comment>
<comment type="catalytic activity">
    <reaction evidence="1 2">
        <text>S-ubiquitinyl-[E1 ubiquitin-activating enzyme]-L-cysteine + [E2 ubiquitin-conjugating enzyme]-L-cysteine = [E1 ubiquitin-activating enzyme]-L-cysteine + S-ubiquitinyl-[E2 ubiquitin-conjugating enzyme]-L-cysteine.</text>
        <dbReference type="EC" id="2.3.2.23"/>
    </reaction>
</comment>
<comment type="pathway">
    <text evidence="1">Protein modification; protein ubiquitination.</text>
</comment>
<comment type="tissue specificity">
    <text evidence="4">Expressed in all tissues examined. Lower levels found in leaves.</text>
</comment>
<comment type="induction">
    <text evidence="3 4">Up-regulated by syringolin, a cell death-inducing chemical, but not induced by heat shock.</text>
</comment>
<comment type="similarity">
    <text evidence="1">Belongs to the ubiquitin-conjugating enzyme family.</text>
</comment>
<comment type="sequence caution" evidence="5">
    <conflict type="erroneous termination">
        <sequence resource="EMBL-CDS" id="AAK82529"/>
    </conflict>
    <text>Truncated C-terminus.</text>
</comment>
<comment type="sequence caution" evidence="5">
    <conflict type="erroneous termination">
        <sequence resource="EMBL-CDS" id="AAN28744"/>
    </conflict>
    <text>Truncated C-terminus.</text>
</comment>
<dbReference type="EC" id="2.3.2.23"/>
<dbReference type="EMBL" id="L19352">
    <property type="protein sequence ID" value="AAA32898.1"/>
    <property type="molecule type" value="Genomic_DNA"/>
</dbReference>
<dbReference type="EMBL" id="DQ027018">
    <property type="protein sequence ID" value="AAY44844.1"/>
    <property type="molecule type" value="mRNA"/>
</dbReference>
<dbReference type="EMBL" id="AB015469">
    <property type="protein sequence ID" value="BAB11504.1"/>
    <property type="molecule type" value="Genomic_DNA"/>
</dbReference>
<dbReference type="EMBL" id="CP002688">
    <property type="protein sequence ID" value="AED97620.1"/>
    <property type="molecule type" value="Genomic_DNA"/>
</dbReference>
<dbReference type="EMBL" id="AY039851">
    <property type="protein sequence ID" value="AAK63955.1"/>
    <property type="molecule type" value="mRNA"/>
</dbReference>
<dbReference type="EMBL" id="AY143805">
    <property type="protein sequence ID" value="AAN28744.1"/>
    <property type="status" value="ALT_SEQ"/>
    <property type="molecule type" value="mRNA"/>
</dbReference>
<dbReference type="EMBL" id="AY048267">
    <property type="protein sequence ID" value="AAK82529.1"/>
    <property type="status" value="ALT_SEQ"/>
    <property type="molecule type" value="mRNA"/>
</dbReference>
<dbReference type="EMBL" id="AY085367">
    <property type="protein sequence ID" value="AAM62597.1"/>
    <property type="molecule type" value="mRNA"/>
</dbReference>
<dbReference type="PIR" id="S43782">
    <property type="entry name" value="S43782"/>
</dbReference>
<dbReference type="RefSeq" id="NP_568956.1">
    <property type="nucleotide sequence ID" value="NM_125648.3"/>
</dbReference>
<dbReference type="SMR" id="P42746"/>
<dbReference type="FunCoup" id="P42746">
    <property type="interactions" value="3803"/>
</dbReference>
<dbReference type="STRING" id="3702.P42746"/>
<dbReference type="PaxDb" id="3702-AT5G62540.1"/>
<dbReference type="ProteomicsDB" id="228523"/>
<dbReference type="EnsemblPlants" id="AT5G62540.1">
    <property type="protein sequence ID" value="AT5G62540.1"/>
    <property type="gene ID" value="AT5G62540"/>
</dbReference>
<dbReference type="GeneID" id="836374"/>
<dbReference type="Gramene" id="AT5G62540.1">
    <property type="protein sequence ID" value="AT5G62540.1"/>
    <property type="gene ID" value="AT5G62540"/>
</dbReference>
<dbReference type="KEGG" id="ath:AT5G62540"/>
<dbReference type="Araport" id="AT5G62540"/>
<dbReference type="TAIR" id="AT5G62540">
    <property type="gene designation" value="UBC3"/>
</dbReference>
<dbReference type="eggNOG" id="KOG0419">
    <property type="taxonomic scope" value="Eukaryota"/>
</dbReference>
<dbReference type="HOGENOM" id="CLU_030988_10_2_1"/>
<dbReference type="InParanoid" id="P42746"/>
<dbReference type="OMA" id="MENDIMH"/>
<dbReference type="OrthoDB" id="9984419at2759"/>
<dbReference type="PhylomeDB" id="P42746"/>
<dbReference type="UniPathway" id="UPA00143"/>
<dbReference type="PRO" id="PR:P42746"/>
<dbReference type="Proteomes" id="UP000006548">
    <property type="component" value="Chromosome 5"/>
</dbReference>
<dbReference type="ExpressionAtlas" id="P42746">
    <property type="expression patterns" value="baseline and differential"/>
</dbReference>
<dbReference type="GO" id="GO:0005524">
    <property type="term" value="F:ATP binding"/>
    <property type="evidence" value="ECO:0007669"/>
    <property type="project" value="UniProtKB-KW"/>
</dbReference>
<dbReference type="GO" id="GO:0061631">
    <property type="term" value="F:ubiquitin conjugating enzyme activity"/>
    <property type="evidence" value="ECO:0007669"/>
    <property type="project" value="UniProtKB-EC"/>
</dbReference>
<dbReference type="GO" id="GO:0004842">
    <property type="term" value="F:ubiquitin-protein transferase activity"/>
    <property type="evidence" value="ECO:0000314"/>
    <property type="project" value="TAIR"/>
</dbReference>
<dbReference type="GO" id="GO:0016567">
    <property type="term" value="P:protein ubiquitination"/>
    <property type="evidence" value="ECO:0007669"/>
    <property type="project" value="UniProtKB-UniPathway"/>
</dbReference>
<dbReference type="GO" id="GO:0006511">
    <property type="term" value="P:ubiquitin-dependent protein catabolic process"/>
    <property type="evidence" value="ECO:0000314"/>
    <property type="project" value="TAIR"/>
</dbReference>
<dbReference type="CDD" id="cd23790">
    <property type="entry name" value="UBCc_UBE2A_2B"/>
    <property type="match status" value="1"/>
</dbReference>
<dbReference type="FunFam" id="3.10.110.10:FF:000017">
    <property type="entry name" value="Ubiquitin-conjugating enzyme E2 2"/>
    <property type="match status" value="1"/>
</dbReference>
<dbReference type="Gene3D" id="3.10.110.10">
    <property type="entry name" value="Ubiquitin Conjugating Enzyme"/>
    <property type="match status" value="1"/>
</dbReference>
<dbReference type="InterPro" id="IPR050113">
    <property type="entry name" value="Ub_conjugating_enzyme"/>
</dbReference>
<dbReference type="InterPro" id="IPR000608">
    <property type="entry name" value="UBQ-conjugat_E2_core"/>
</dbReference>
<dbReference type="InterPro" id="IPR023313">
    <property type="entry name" value="UBQ-conjugating_AS"/>
</dbReference>
<dbReference type="InterPro" id="IPR016135">
    <property type="entry name" value="UBQ-conjugating_enzyme/RWD"/>
</dbReference>
<dbReference type="PANTHER" id="PTHR24067">
    <property type="entry name" value="UBIQUITIN-CONJUGATING ENZYME E2"/>
    <property type="match status" value="1"/>
</dbReference>
<dbReference type="Pfam" id="PF00179">
    <property type="entry name" value="UQ_con"/>
    <property type="match status" value="1"/>
</dbReference>
<dbReference type="SMART" id="SM00212">
    <property type="entry name" value="UBCc"/>
    <property type="match status" value="1"/>
</dbReference>
<dbReference type="SUPFAM" id="SSF54495">
    <property type="entry name" value="UBC-like"/>
    <property type="match status" value="1"/>
</dbReference>
<dbReference type="PROSITE" id="PS00183">
    <property type="entry name" value="UBC_1"/>
    <property type="match status" value="1"/>
</dbReference>
<dbReference type="PROSITE" id="PS50127">
    <property type="entry name" value="UBC_2"/>
    <property type="match status" value="1"/>
</dbReference>
<proteinExistence type="evidence at transcript level"/>
<sequence>MTTPAKKRLMWDFKRLQKDPPVGISGAPQDNNIMHWNALIFGPEDTPWDGGTFKLTLHFTEDYPNKPPIVRFVSRMFHPNIYADGSICLDILQNQWSPIYDVAAVLTSIQSLLCDPNPDSPANAEAARLFSENKREYNRKVIEIVEQSYV</sequence>